<protein>
    <recommendedName>
        <fullName evidence="1">Protein Syd</fullName>
    </recommendedName>
</protein>
<dbReference type="EMBL" id="CP001139">
    <property type="protein sequence ID" value="ACH65516.1"/>
    <property type="molecule type" value="Genomic_DNA"/>
</dbReference>
<dbReference type="RefSeq" id="WP_012533109.1">
    <property type="nucleotide sequence ID" value="NC_011184.1"/>
</dbReference>
<dbReference type="SMR" id="B5FAU2"/>
<dbReference type="KEGG" id="vfm:VFMJ11_0613"/>
<dbReference type="HOGENOM" id="CLU_121866_0_0_6"/>
<dbReference type="Proteomes" id="UP000001857">
    <property type="component" value="Chromosome I"/>
</dbReference>
<dbReference type="GO" id="GO:0009898">
    <property type="term" value="C:cytoplasmic side of plasma membrane"/>
    <property type="evidence" value="ECO:0007669"/>
    <property type="project" value="InterPro"/>
</dbReference>
<dbReference type="CDD" id="cd16323">
    <property type="entry name" value="Syd"/>
    <property type="match status" value="1"/>
</dbReference>
<dbReference type="Gene3D" id="3.40.1580.20">
    <property type="entry name" value="Syd protein"/>
    <property type="match status" value="1"/>
</dbReference>
<dbReference type="HAMAP" id="MF_01104">
    <property type="entry name" value="Syd"/>
    <property type="match status" value="1"/>
</dbReference>
<dbReference type="InterPro" id="IPR009948">
    <property type="entry name" value="Syd"/>
</dbReference>
<dbReference type="InterPro" id="IPR038228">
    <property type="entry name" value="Syd_sf"/>
</dbReference>
<dbReference type="NCBIfam" id="NF003439">
    <property type="entry name" value="PRK04968.1"/>
    <property type="match status" value="1"/>
</dbReference>
<dbReference type="Pfam" id="PF07348">
    <property type="entry name" value="Syd"/>
    <property type="match status" value="1"/>
</dbReference>
<gene>
    <name evidence="1" type="primary">syd</name>
    <name type="ordered locus">VFMJ11_0613</name>
</gene>
<comment type="function">
    <text evidence="1">Interacts with the SecY protein in vivo. May bind preferentially to an uncomplexed state of SecY, thus functioning either as a chelating agent for excess SecY in the cell or as a regulatory factor that negatively controls the translocase function.</text>
</comment>
<comment type="subcellular location">
    <subcellularLocation>
        <location evidence="1">Cell inner membrane</location>
        <topology evidence="1">Peripheral membrane protein</topology>
        <orientation evidence="1">Cytoplasmic side</orientation>
    </subcellularLocation>
    <text evidence="1">Loosely associated with the cytoplasmic side of the inner membrane, probably via SecY.</text>
</comment>
<comment type="similarity">
    <text evidence="1">Belongs to the Syd family.</text>
</comment>
<keyword id="KW-0997">Cell inner membrane</keyword>
<keyword id="KW-1003">Cell membrane</keyword>
<keyword id="KW-0472">Membrane</keyword>
<proteinExistence type="inferred from homology"/>
<organism>
    <name type="scientific">Aliivibrio fischeri (strain MJ11)</name>
    <name type="common">Vibrio fischeri</name>
    <dbReference type="NCBI Taxonomy" id="388396"/>
    <lineage>
        <taxon>Bacteria</taxon>
        <taxon>Pseudomonadati</taxon>
        <taxon>Pseudomonadota</taxon>
        <taxon>Gammaproteobacteria</taxon>
        <taxon>Vibrionales</taxon>
        <taxon>Vibrionaceae</taxon>
        <taxon>Aliivibrio</taxon>
    </lineage>
</organism>
<evidence type="ECO:0000255" key="1">
    <source>
        <dbReference type="HAMAP-Rule" id="MF_01104"/>
    </source>
</evidence>
<name>SYDP_ALIFM</name>
<reference key="1">
    <citation type="submission" date="2008-08" db="EMBL/GenBank/DDBJ databases">
        <title>Complete sequence of Vibrio fischeri strain MJ11.</title>
        <authorList>
            <person name="Mandel M.J."/>
            <person name="Stabb E.V."/>
            <person name="Ruby E.G."/>
            <person name="Ferriera S."/>
            <person name="Johnson J."/>
            <person name="Kravitz S."/>
            <person name="Beeson K."/>
            <person name="Sutton G."/>
            <person name="Rogers Y.-H."/>
            <person name="Friedman R."/>
            <person name="Frazier M."/>
            <person name="Venter J.C."/>
        </authorList>
    </citation>
    <scope>NUCLEOTIDE SEQUENCE [LARGE SCALE GENOMIC DNA]</scope>
    <source>
        <strain>MJ11</strain>
    </source>
</reference>
<sequence length="183" mass="20855">MPLSVEQALANFSQRYVEAWKAQHDCLPINEELVGLASPCIEETRDLEISWQPIVRDEAIRLHNIEQGIELDLHDDFHAFYGTQYSADMTAKFEDMNIELLQVWSDEDLERLQGNMLGHLVMQRRLKLVPTLFVAVTDDEMEVVSICNQSGEVILERVGTKNRTVLAANMAEFLNKLEPVIAA</sequence>
<accession>B5FAU2</accession>
<feature type="chain" id="PRO_1000137044" description="Protein Syd">
    <location>
        <begin position="1"/>
        <end position="183"/>
    </location>
</feature>